<accession>Q049E0</accession>
<dbReference type="EC" id="4.1.1.23" evidence="1"/>
<dbReference type="EMBL" id="CP000412">
    <property type="protein sequence ID" value="ABJ58932.1"/>
    <property type="molecule type" value="Genomic_DNA"/>
</dbReference>
<dbReference type="RefSeq" id="WP_003620198.1">
    <property type="nucleotide sequence ID" value="NC_008529.1"/>
</dbReference>
<dbReference type="SMR" id="Q049E0"/>
<dbReference type="KEGG" id="lbu:LBUL_1422"/>
<dbReference type="HOGENOM" id="CLU_067069_1_1_9"/>
<dbReference type="BioCyc" id="LDEL321956:LBUL_RS06705-MONOMER"/>
<dbReference type="UniPathway" id="UPA00070">
    <property type="reaction ID" value="UER00120"/>
</dbReference>
<dbReference type="GO" id="GO:0005829">
    <property type="term" value="C:cytosol"/>
    <property type="evidence" value="ECO:0007669"/>
    <property type="project" value="TreeGrafter"/>
</dbReference>
<dbReference type="GO" id="GO:0004590">
    <property type="term" value="F:orotidine-5'-phosphate decarboxylase activity"/>
    <property type="evidence" value="ECO:0007669"/>
    <property type="project" value="UniProtKB-UniRule"/>
</dbReference>
<dbReference type="GO" id="GO:0006207">
    <property type="term" value="P:'de novo' pyrimidine nucleobase biosynthetic process"/>
    <property type="evidence" value="ECO:0007669"/>
    <property type="project" value="InterPro"/>
</dbReference>
<dbReference type="GO" id="GO:0044205">
    <property type="term" value="P:'de novo' UMP biosynthetic process"/>
    <property type="evidence" value="ECO:0007669"/>
    <property type="project" value="UniProtKB-UniRule"/>
</dbReference>
<dbReference type="CDD" id="cd04725">
    <property type="entry name" value="OMP_decarboxylase_like"/>
    <property type="match status" value="1"/>
</dbReference>
<dbReference type="FunFam" id="3.20.20.70:FF:000015">
    <property type="entry name" value="Orotidine 5'-phosphate decarboxylase"/>
    <property type="match status" value="1"/>
</dbReference>
<dbReference type="Gene3D" id="3.20.20.70">
    <property type="entry name" value="Aldolase class I"/>
    <property type="match status" value="1"/>
</dbReference>
<dbReference type="HAMAP" id="MF_01200_B">
    <property type="entry name" value="OMPdecase_type1_B"/>
    <property type="match status" value="1"/>
</dbReference>
<dbReference type="InterPro" id="IPR013785">
    <property type="entry name" value="Aldolase_TIM"/>
</dbReference>
<dbReference type="InterPro" id="IPR014732">
    <property type="entry name" value="OMPdecase"/>
</dbReference>
<dbReference type="InterPro" id="IPR018089">
    <property type="entry name" value="OMPdecase_AS"/>
</dbReference>
<dbReference type="InterPro" id="IPR047596">
    <property type="entry name" value="OMPdecase_bac"/>
</dbReference>
<dbReference type="InterPro" id="IPR001754">
    <property type="entry name" value="OMPdeCOase_dom"/>
</dbReference>
<dbReference type="InterPro" id="IPR011060">
    <property type="entry name" value="RibuloseP-bd_barrel"/>
</dbReference>
<dbReference type="NCBIfam" id="NF001273">
    <property type="entry name" value="PRK00230.1"/>
    <property type="match status" value="1"/>
</dbReference>
<dbReference type="NCBIfam" id="TIGR01740">
    <property type="entry name" value="pyrF"/>
    <property type="match status" value="1"/>
</dbReference>
<dbReference type="PANTHER" id="PTHR32119">
    <property type="entry name" value="OROTIDINE 5'-PHOSPHATE DECARBOXYLASE"/>
    <property type="match status" value="1"/>
</dbReference>
<dbReference type="PANTHER" id="PTHR32119:SF2">
    <property type="entry name" value="OROTIDINE 5'-PHOSPHATE DECARBOXYLASE"/>
    <property type="match status" value="1"/>
</dbReference>
<dbReference type="Pfam" id="PF00215">
    <property type="entry name" value="OMPdecase"/>
    <property type="match status" value="1"/>
</dbReference>
<dbReference type="SMART" id="SM00934">
    <property type="entry name" value="OMPdecase"/>
    <property type="match status" value="1"/>
</dbReference>
<dbReference type="SUPFAM" id="SSF51366">
    <property type="entry name" value="Ribulose-phoshate binding barrel"/>
    <property type="match status" value="1"/>
</dbReference>
<dbReference type="PROSITE" id="PS00156">
    <property type="entry name" value="OMPDECASE"/>
    <property type="match status" value="1"/>
</dbReference>
<proteinExistence type="inferred from homology"/>
<organism>
    <name type="scientific">Lactobacillus delbrueckii subsp. bulgaricus (strain ATCC BAA-365 / Lb-18)</name>
    <dbReference type="NCBI Taxonomy" id="321956"/>
    <lineage>
        <taxon>Bacteria</taxon>
        <taxon>Bacillati</taxon>
        <taxon>Bacillota</taxon>
        <taxon>Bacilli</taxon>
        <taxon>Lactobacillales</taxon>
        <taxon>Lactobacillaceae</taxon>
        <taxon>Lactobacillus</taxon>
    </lineage>
</organism>
<feature type="chain" id="PRO_1000065913" description="Orotidine 5'-phosphate decarboxylase">
    <location>
        <begin position="1"/>
        <end position="240"/>
    </location>
</feature>
<feature type="active site" description="Proton donor" evidence="1">
    <location>
        <position position="62"/>
    </location>
</feature>
<feature type="binding site" evidence="1">
    <location>
        <position position="10"/>
    </location>
    <ligand>
        <name>substrate</name>
    </ligand>
</feature>
<feature type="binding site" evidence="1">
    <location>
        <position position="33"/>
    </location>
    <ligand>
        <name>substrate</name>
    </ligand>
</feature>
<feature type="binding site" evidence="1">
    <location>
        <begin position="60"/>
        <end position="69"/>
    </location>
    <ligand>
        <name>substrate</name>
    </ligand>
</feature>
<feature type="binding site" evidence="1">
    <location>
        <position position="123"/>
    </location>
    <ligand>
        <name>substrate</name>
    </ligand>
</feature>
<feature type="binding site" evidence="1">
    <location>
        <position position="185"/>
    </location>
    <ligand>
        <name>substrate</name>
    </ligand>
</feature>
<feature type="binding site" evidence="1">
    <location>
        <position position="194"/>
    </location>
    <ligand>
        <name>substrate</name>
    </ligand>
</feature>
<feature type="binding site" evidence="1">
    <location>
        <position position="214"/>
    </location>
    <ligand>
        <name>substrate</name>
    </ligand>
</feature>
<feature type="binding site" evidence="1">
    <location>
        <position position="215"/>
    </location>
    <ligand>
        <name>substrate</name>
    </ligand>
</feature>
<gene>
    <name evidence="1" type="primary">pyrF</name>
    <name type="ordered locus">LBUL_1422</name>
</gene>
<sequence>MNKPLFIALDYDDQEKMWLFLNQLKDKQGLHVKLGMEMFYQYGPEIVRDLSAKGYQIFLDLKLHDIPNTVKRTAHQLAALGVYCTTVHALGGKQMIQAAKEGLIEGTPAGKPVPKLLAVTELTSISEEVLKNEQHCSLNLADEVKSLAHQAQEAEADGIICSPLEVKAMKSEFSDDFMFVTPGIRPKSYQKDDQARVATPGQARENGSTAIVVGRPITQAADPQKAYEEILKDWSKNDAK</sequence>
<name>PYRF_LACDB</name>
<keyword id="KW-0210">Decarboxylase</keyword>
<keyword id="KW-0456">Lyase</keyword>
<keyword id="KW-0665">Pyrimidine biosynthesis</keyword>
<evidence type="ECO:0000255" key="1">
    <source>
        <dbReference type="HAMAP-Rule" id="MF_01200"/>
    </source>
</evidence>
<comment type="function">
    <text evidence="1">Catalyzes the decarboxylation of orotidine 5'-monophosphate (OMP) to uridine 5'-monophosphate (UMP).</text>
</comment>
<comment type="catalytic activity">
    <reaction evidence="1">
        <text>orotidine 5'-phosphate + H(+) = UMP + CO2</text>
        <dbReference type="Rhea" id="RHEA:11596"/>
        <dbReference type="ChEBI" id="CHEBI:15378"/>
        <dbReference type="ChEBI" id="CHEBI:16526"/>
        <dbReference type="ChEBI" id="CHEBI:57538"/>
        <dbReference type="ChEBI" id="CHEBI:57865"/>
        <dbReference type="EC" id="4.1.1.23"/>
    </reaction>
</comment>
<comment type="pathway">
    <text evidence="1">Pyrimidine metabolism; UMP biosynthesis via de novo pathway; UMP from orotate: step 2/2.</text>
</comment>
<comment type="subunit">
    <text evidence="1">Homodimer.</text>
</comment>
<comment type="similarity">
    <text evidence="1">Belongs to the OMP decarboxylase family. Type 1 subfamily.</text>
</comment>
<protein>
    <recommendedName>
        <fullName evidence="1">Orotidine 5'-phosphate decarboxylase</fullName>
        <ecNumber evidence="1">4.1.1.23</ecNumber>
    </recommendedName>
    <alternativeName>
        <fullName evidence="1">OMP decarboxylase</fullName>
        <shortName evidence="1">OMPDCase</shortName>
        <shortName evidence="1">OMPdecase</shortName>
    </alternativeName>
</protein>
<reference key="1">
    <citation type="journal article" date="2006" name="Proc. Natl. Acad. Sci. U.S.A.">
        <title>Comparative genomics of the lactic acid bacteria.</title>
        <authorList>
            <person name="Makarova K.S."/>
            <person name="Slesarev A."/>
            <person name="Wolf Y.I."/>
            <person name="Sorokin A."/>
            <person name="Mirkin B."/>
            <person name="Koonin E.V."/>
            <person name="Pavlov A."/>
            <person name="Pavlova N."/>
            <person name="Karamychev V."/>
            <person name="Polouchine N."/>
            <person name="Shakhova V."/>
            <person name="Grigoriev I."/>
            <person name="Lou Y."/>
            <person name="Rohksar D."/>
            <person name="Lucas S."/>
            <person name="Huang K."/>
            <person name="Goodstein D.M."/>
            <person name="Hawkins T."/>
            <person name="Plengvidhya V."/>
            <person name="Welker D."/>
            <person name="Hughes J."/>
            <person name="Goh Y."/>
            <person name="Benson A."/>
            <person name="Baldwin K."/>
            <person name="Lee J.-H."/>
            <person name="Diaz-Muniz I."/>
            <person name="Dosti B."/>
            <person name="Smeianov V."/>
            <person name="Wechter W."/>
            <person name="Barabote R."/>
            <person name="Lorca G."/>
            <person name="Altermann E."/>
            <person name="Barrangou R."/>
            <person name="Ganesan B."/>
            <person name="Xie Y."/>
            <person name="Rawsthorne H."/>
            <person name="Tamir D."/>
            <person name="Parker C."/>
            <person name="Breidt F."/>
            <person name="Broadbent J.R."/>
            <person name="Hutkins R."/>
            <person name="O'Sullivan D."/>
            <person name="Steele J."/>
            <person name="Unlu G."/>
            <person name="Saier M.H. Jr."/>
            <person name="Klaenhammer T."/>
            <person name="Richardson P."/>
            <person name="Kozyavkin S."/>
            <person name="Weimer B.C."/>
            <person name="Mills D.A."/>
        </authorList>
    </citation>
    <scope>NUCLEOTIDE SEQUENCE [LARGE SCALE GENOMIC DNA]</scope>
    <source>
        <strain>ATCC BAA-365 / Lb-18</strain>
    </source>
</reference>